<comment type="function">
    <text evidence="2 3 4 5">Acts as a methyl group carrier in the anaerobic acetyl-CoA pathway (Wood-Ljungdahl pathway) of carbon monoxide and carbon dioxide fixation. Binds the corrinoid 5-methoxybenzimidazolylcobamide which is then methylated by the AcsE subunit (PubMed:2821001).</text>
</comment>
<comment type="cofactor">
    <cofactor evidence="2 3">
        <name>[4Fe-4S] cluster</name>
        <dbReference type="ChEBI" id="CHEBI:49883"/>
    </cofactor>
    <text evidence="2 3">Binds 1 [4Fe-4S] cluster.</text>
</comment>
<comment type="subunit">
    <text evidence="2">Heterohexamer composed of 2 subunits of AcsC, 2 subunits of AcsD and 2 subunits of AcsE.</text>
</comment>
<comment type="interaction">
    <interactant intactId="EBI-15974900">
        <id>Q07340</id>
    </interactant>
    <interactant intactId="EBI-15974920">
        <id>Q07341</id>
        <label>acsD</label>
    </interactant>
    <organismsDiffer>false</organismsDiffer>
    <experiments>2</experiments>
</comment>
<feature type="initiator methionine" description="Removed" evidence="6">
    <location>
        <position position="1"/>
    </location>
</feature>
<feature type="chain" id="PRO_0000064441" description="Corrinoid/iron-sulfur protein large subunit">
    <location>
        <begin position="2"/>
        <end position="446"/>
    </location>
</feature>
<feature type="domain" description="4Fe-4S" evidence="1">
    <location>
        <begin position="2"/>
        <end position="59"/>
    </location>
</feature>
<feature type="binding site" evidence="2 8">
    <location>
        <position position="17"/>
    </location>
    <ligand>
        <name>[4Fe-4S] cluster</name>
        <dbReference type="ChEBI" id="CHEBI:49883"/>
    </ligand>
</feature>
<feature type="binding site" evidence="2 8">
    <location>
        <position position="20"/>
    </location>
    <ligand>
        <name>[4Fe-4S] cluster</name>
        <dbReference type="ChEBI" id="CHEBI:49883"/>
    </ligand>
</feature>
<feature type="binding site" evidence="2 8">
    <location>
        <position position="25"/>
    </location>
    <ligand>
        <name>[4Fe-4S] cluster</name>
        <dbReference type="ChEBI" id="CHEBI:49883"/>
    </ligand>
</feature>
<feature type="binding site" evidence="2 8">
    <location>
        <position position="42"/>
    </location>
    <ligand>
        <name>[4Fe-4S] cluster</name>
        <dbReference type="ChEBI" id="CHEBI:49883"/>
    </ligand>
</feature>
<feature type="binding site" evidence="7 8">
    <location>
        <position position="340"/>
    </location>
    <ligand>
        <name>5-methoxybenzimidazolylcob(I)amide</name>
        <dbReference type="ChEBI" id="CHEBI:157765"/>
    </ligand>
</feature>
<feature type="binding site" evidence="7 8">
    <location>
        <position position="346"/>
    </location>
    <ligand>
        <name>5-methoxybenzimidazolylcob(I)amide</name>
        <dbReference type="ChEBI" id="CHEBI:157765"/>
    </ligand>
</feature>
<feature type="binding site" evidence="7 8">
    <location>
        <begin position="370"/>
        <end position="373"/>
    </location>
    <ligand>
        <name>5-methoxybenzimidazolylcob(I)amide</name>
        <dbReference type="ChEBI" id="CHEBI:157765"/>
    </ligand>
</feature>
<feature type="binding site" evidence="7 8">
    <location>
        <position position="433"/>
    </location>
    <ligand>
        <name>5-methoxybenzimidazolylcob(I)amide</name>
        <dbReference type="ChEBI" id="CHEBI:157765"/>
    </ligand>
</feature>
<feature type="helix" evidence="9">
    <location>
        <begin position="5"/>
        <end position="9"/>
    </location>
</feature>
<feature type="strand" evidence="9">
    <location>
        <begin position="21"/>
        <end position="24"/>
    </location>
</feature>
<feature type="helix" evidence="9">
    <location>
        <begin position="25"/>
        <end position="34"/>
    </location>
</feature>
<feature type="helix" evidence="9">
    <location>
        <begin position="39"/>
        <end position="41"/>
    </location>
</feature>
<feature type="helix" evidence="9">
    <location>
        <begin position="47"/>
        <end position="55"/>
    </location>
</feature>
<feature type="strand" evidence="9">
    <location>
        <begin position="63"/>
        <end position="68"/>
    </location>
</feature>
<feature type="strand" evidence="9">
    <location>
        <begin position="73"/>
        <end position="76"/>
    </location>
</feature>
<feature type="helix" evidence="9">
    <location>
        <begin position="83"/>
        <end position="85"/>
    </location>
</feature>
<feature type="strand" evidence="9">
    <location>
        <begin position="93"/>
        <end position="99"/>
    </location>
</feature>
<feature type="helix" evidence="9">
    <location>
        <begin position="104"/>
        <end position="114"/>
    </location>
</feature>
<feature type="strand" evidence="9">
    <location>
        <begin position="119"/>
        <end position="121"/>
    </location>
</feature>
<feature type="strand" evidence="9">
    <location>
        <begin position="124"/>
        <end position="126"/>
    </location>
</feature>
<feature type="strand" evidence="9">
    <location>
        <begin position="130"/>
        <end position="134"/>
    </location>
</feature>
<feature type="strand" evidence="9">
    <location>
        <begin position="137"/>
        <end position="139"/>
    </location>
</feature>
<feature type="helix" evidence="9">
    <location>
        <begin position="141"/>
        <end position="151"/>
    </location>
</feature>
<feature type="strand" evidence="9">
    <location>
        <begin position="156"/>
        <end position="161"/>
    </location>
</feature>
<feature type="helix" evidence="9">
    <location>
        <begin position="165"/>
        <end position="172"/>
    </location>
</feature>
<feature type="helix" evidence="9">
    <location>
        <begin position="173"/>
        <end position="178"/>
    </location>
</feature>
<feature type="strand" evidence="9">
    <location>
        <begin position="181"/>
        <end position="185"/>
    </location>
</feature>
<feature type="turn" evidence="9">
    <location>
        <begin position="187"/>
        <end position="189"/>
    </location>
</feature>
<feature type="helix" evidence="9">
    <location>
        <begin position="190"/>
        <end position="199"/>
    </location>
</feature>
<feature type="strand" evidence="9">
    <location>
        <begin position="204"/>
        <end position="207"/>
    </location>
</feature>
<feature type="helix" evidence="9">
    <location>
        <begin position="211"/>
        <end position="223"/>
    </location>
</feature>
<feature type="strand" evidence="9">
    <location>
        <begin position="229"/>
        <end position="232"/>
    </location>
</feature>
<feature type="helix" evidence="9">
    <location>
        <begin position="238"/>
        <end position="254"/>
    </location>
</feature>
<feature type="helix" evidence="9">
    <location>
        <begin position="258"/>
        <end position="260"/>
    </location>
</feature>
<feature type="strand" evidence="9">
    <location>
        <begin position="264"/>
        <end position="267"/>
    </location>
</feature>
<feature type="helix" evidence="9">
    <location>
        <begin position="273"/>
        <end position="285"/>
    </location>
</feature>
<feature type="strand" evidence="9">
    <location>
        <begin position="289"/>
        <end position="294"/>
    </location>
</feature>
<feature type="helix" evidence="9">
    <location>
        <begin position="298"/>
        <end position="311"/>
    </location>
</feature>
<feature type="strand" evidence="9">
    <location>
        <begin position="315"/>
        <end position="317"/>
    </location>
</feature>
<feature type="strand" evidence="10">
    <location>
        <begin position="326"/>
        <end position="328"/>
    </location>
</feature>
<feature type="strand" evidence="9">
    <location>
        <begin position="337"/>
        <end position="340"/>
    </location>
</feature>
<feature type="helix" evidence="9">
    <location>
        <begin position="344"/>
        <end position="351"/>
    </location>
</feature>
<feature type="turn" evidence="9">
    <location>
        <begin position="352"/>
        <end position="358"/>
    </location>
</feature>
<feature type="strand" evidence="9">
    <location>
        <begin position="362"/>
        <end position="365"/>
    </location>
</feature>
<feature type="strand" evidence="10">
    <location>
        <begin position="368"/>
        <end position="370"/>
    </location>
</feature>
<feature type="helix" evidence="9">
    <location>
        <begin position="373"/>
        <end position="378"/>
    </location>
</feature>
<feature type="helix" evidence="9">
    <location>
        <begin position="384"/>
        <end position="393"/>
    </location>
</feature>
<feature type="helix" evidence="9">
    <location>
        <begin position="396"/>
        <end position="398"/>
    </location>
</feature>
<feature type="strand" evidence="10">
    <location>
        <begin position="400"/>
        <end position="402"/>
    </location>
</feature>
<feature type="strand" evidence="9">
    <location>
        <begin position="404"/>
        <end position="407"/>
    </location>
</feature>
<feature type="helix" evidence="9">
    <location>
        <begin position="409"/>
        <end position="411"/>
    </location>
</feature>
<feature type="helix" evidence="9">
    <location>
        <begin position="414"/>
        <end position="422"/>
    </location>
</feature>
<feature type="strand" evidence="9">
    <location>
        <begin position="424"/>
        <end position="428"/>
    </location>
</feature>
<feature type="helix" evidence="9">
    <location>
        <begin position="433"/>
        <end position="435"/>
    </location>
</feature>
<feature type="helix" evidence="9">
    <location>
        <begin position="436"/>
        <end position="441"/>
    </location>
</feature>
<evidence type="ECO:0000255" key="1">
    <source>
        <dbReference type="PROSITE-ProRule" id="PRU00989"/>
    </source>
</evidence>
<evidence type="ECO:0000269" key="2">
    <source>
    </source>
</evidence>
<evidence type="ECO:0000269" key="3">
    <source>
    </source>
</evidence>
<evidence type="ECO:0000269" key="4">
    <source>
    </source>
</evidence>
<evidence type="ECO:0000269" key="5">
    <source>
    </source>
</evidence>
<evidence type="ECO:0000305" key="6"/>
<evidence type="ECO:0000305" key="7">
    <source>
    </source>
</evidence>
<evidence type="ECO:0007744" key="8">
    <source>
        <dbReference type="PDB" id="4DJD"/>
    </source>
</evidence>
<evidence type="ECO:0007829" key="9">
    <source>
        <dbReference type="PDB" id="4DJD"/>
    </source>
</evidence>
<evidence type="ECO:0007829" key="10">
    <source>
        <dbReference type="PDB" id="4DJF"/>
    </source>
</evidence>
<name>ACSC_MOOTH</name>
<gene>
    <name type="primary">acsC</name>
</gene>
<protein>
    <recommendedName>
        <fullName>Corrinoid/iron-sulfur protein large subunit</fullName>
        <shortName>C/Fe-SP large subunit</shortName>
        <shortName>CFeSP large subunit</shortName>
    </recommendedName>
</protein>
<organism>
    <name type="scientific">Moorella thermoacetica</name>
    <name type="common">Clostridium thermoaceticum</name>
    <dbReference type="NCBI Taxonomy" id="1525"/>
    <lineage>
        <taxon>Bacteria</taxon>
        <taxon>Bacillati</taxon>
        <taxon>Bacillota</taxon>
        <taxon>Clostridia</taxon>
        <taxon>Moorellales</taxon>
        <taxon>Moorellaceae</taxon>
        <taxon>Moorella</taxon>
    </lineage>
</organism>
<sequence>MPLTGLEIYKQLPKKNCGECGTPTCLAFAMNLASGKASLDSCPYVSDAAREALDAAAAPPIAKVVLGAGPTAVEMGDETELFRHDKRFYHETAIAIQVSDNLSSEELKAKVEAINGLNFDRVGQHYTIQAIAIRHDADDPAAFKAAVASVAAATQLNLVLMADDPDVLKEALAGVADRKPLLYAATGANYEAMTALAKENNCPLAVYGNGLEELAELVDKIVALGHKQLVLDPGARETSRAIADFTQIRRLAIKKRFRSFGYPIIALTTAANPLDEVLQAVNYVTKYASLVVLRTDAKEHLLPLLSWRQNLYTDPQVPIRVEEKLNEIGAVNENSPVYVTTNFSLTYYSVEGEIESTKIPSYLLSVDTDGLSVLTAYADGKFEAEKIAAVMKKVDLDNKVKRHRIIIPGAVAVLKGKLEDLTGWEVIVGPREASGIVAFARANLAS</sequence>
<dbReference type="EMBL" id="L07099">
    <property type="protein sequence ID" value="AAA23254.1"/>
    <property type="molecule type" value="Genomic_DNA"/>
</dbReference>
<dbReference type="PIR" id="A46621">
    <property type="entry name" value="A46621"/>
</dbReference>
<dbReference type="RefSeq" id="WP_011392715.1">
    <property type="nucleotide sequence ID" value="NZ_VCDY01000001.1"/>
</dbReference>
<dbReference type="PDB" id="4DJD">
    <property type="method" value="X-ray"/>
    <property type="resolution" value="2.38 A"/>
    <property type="chains" value="C/E=1-446"/>
</dbReference>
<dbReference type="PDB" id="4DJE">
    <property type="method" value="X-ray"/>
    <property type="resolution" value="3.50 A"/>
    <property type="chains" value="C/E=1-446"/>
</dbReference>
<dbReference type="PDB" id="4DJF">
    <property type="method" value="X-ray"/>
    <property type="resolution" value="3.03 A"/>
    <property type="chains" value="C/E=1-446"/>
</dbReference>
<dbReference type="PDBsum" id="4DJD"/>
<dbReference type="PDBsum" id="4DJE"/>
<dbReference type="PDBsum" id="4DJF"/>
<dbReference type="SMR" id="Q07340"/>
<dbReference type="DIP" id="DIP-59669N"/>
<dbReference type="IntAct" id="Q07340">
    <property type="interactions" value="2"/>
</dbReference>
<dbReference type="GeneID" id="45617239"/>
<dbReference type="OMA" id="CMAFATK"/>
<dbReference type="BioCyc" id="MetaCyc:COEBETACLTH-MONOMER"/>
<dbReference type="EvolutionaryTrace" id="Q07340"/>
<dbReference type="GO" id="GO:0051539">
    <property type="term" value="F:4 iron, 4 sulfur cluster binding"/>
    <property type="evidence" value="ECO:0000314"/>
    <property type="project" value="UniProtKB"/>
</dbReference>
<dbReference type="GO" id="GO:0031419">
    <property type="term" value="F:cobalamin binding"/>
    <property type="evidence" value="ECO:0000314"/>
    <property type="project" value="UniProtKB"/>
</dbReference>
<dbReference type="GO" id="GO:0005506">
    <property type="term" value="F:iron ion binding"/>
    <property type="evidence" value="ECO:0007669"/>
    <property type="project" value="InterPro"/>
</dbReference>
<dbReference type="GO" id="GO:0008168">
    <property type="term" value="F:methyltransferase activity"/>
    <property type="evidence" value="ECO:0007669"/>
    <property type="project" value="InterPro"/>
</dbReference>
<dbReference type="GO" id="GO:0046356">
    <property type="term" value="P:acetyl-CoA catabolic process"/>
    <property type="evidence" value="ECO:0007669"/>
    <property type="project" value="InterPro"/>
</dbReference>
<dbReference type="GO" id="GO:0015977">
    <property type="term" value="P:carbon fixation"/>
    <property type="evidence" value="ECO:0000314"/>
    <property type="project" value="UniProtKB"/>
</dbReference>
<dbReference type="FunFam" id="3.40.50.11600:FF:000001">
    <property type="entry name" value="Acetyl-CoA decarbonylase/synthase complex subunit gamma"/>
    <property type="match status" value="1"/>
</dbReference>
<dbReference type="FunFam" id="3.20.20.20:FF:000025">
    <property type="entry name" value="Corrinoid/iron-sulfur protein large subunit"/>
    <property type="match status" value="1"/>
</dbReference>
<dbReference type="Gene3D" id="3.40.50.11600">
    <property type="match status" value="1"/>
</dbReference>
<dbReference type="Gene3D" id="3.20.20.20">
    <property type="entry name" value="Dihydropteroate synthase-like"/>
    <property type="match status" value="1"/>
</dbReference>
<dbReference type="InterPro" id="IPR007202">
    <property type="entry name" value="4Fe-4S_dom"/>
</dbReference>
<dbReference type="InterPro" id="IPR016041">
    <property type="entry name" value="Ac-CoA_synth_d_su_TIM-brl"/>
</dbReference>
<dbReference type="InterPro" id="IPR051069">
    <property type="entry name" value="ACDS_complex_subunit"/>
</dbReference>
<dbReference type="InterPro" id="IPR016218">
    <property type="entry name" value="AcylCoA_decarb/synth_gsu"/>
</dbReference>
<dbReference type="InterPro" id="IPR011005">
    <property type="entry name" value="Dihydropteroate_synth-like_sf"/>
</dbReference>
<dbReference type="NCBIfam" id="NF003195">
    <property type="entry name" value="PRK04165.1"/>
    <property type="match status" value="1"/>
</dbReference>
<dbReference type="PANTHER" id="PTHR36214">
    <property type="match status" value="1"/>
</dbReference>
<dbReference type="PANTHER" id="PTHR36214:SF3">
    <property type="entry name" value="ACETYL-COA DECARBONYLASE_SYNTHASE COMPLEX SUBUNIT GAMMA"/>
    <property type="match status" value="1"/>
</dbReference>
<dbReference type="Pfam" id="PF03599">
    <property type="entry name" value="CdhD"/>
    <property type="match status" value="1"/>
</dbReference>
<dbReference type="Pfam" id="PF04060">
    <property type="entry name" value="FeS"/>
    <property type="match status" value="1"/>
</dbReference>
<dbReference type="PIRSF" id="PIRSF000376">
    <property type="entry name" value="AcCoA_decarb_gamma"/>
    <property type="match status" value="1"/>
</dbReference>
<dbReference type="SUPFAM" id="SSF51717">
    <property type="entry name" value="Dihydropteroate synthetase-like"/>
    <property type="match status" value="1"/>
</dbReference>
<dbReference type="PROSITE" id="PS51656">
    <property type="entry name" value="4FE4S"/>
    <property type="match status" value="1"/>
</dbReference>
<keyword id="KW-0002">3D-structure</keyword>
<keyword id="KW-0004">4Fe-4S</keyword>
<keyword id="KW-0120">Carbon dioxide fixation</keyword>
<keyword id="KW-0170">Cobalt</keyword>
<keyword id="KW-0903">Direct protein sequencing</keyword>
<keyword id="KW-0408">Iron</keyword>
<keyword id="KW-0411">Iron-sulfur</keyword>
<keyword id="KW-0479">Metal-binding</keyword>
<reference key="1">
    <citation type="journal article" date="1993" name="J. Biol. Chem.">
        <title>Sequence and expression of the gene encoding the corrinoid/iron-sulfur protein from Clostridium thermoaceticum and reconstitution of the recombinant protein to full activity.</title>
        <authorList>
            <person name="Lu W.-P."/>
            <person name="Schiau I."/>
            <person name="Cunningham J.R."/>
            <person name="Ragsdale S.W."/>
        </authorList>
    </citation>
    <scope>NUCLEOTIDE SEQUENCE [GENOMIC DNA]</scope>
    <scope>PARTIAL PROTEIN SEQUENCE</scope>
    <scope>FUNCTION</scope>
</reference>
<reference key="2">
    <citation type="journal article" date="1989" name="Proc. Natl. Acad. Sci. U.S.A.">
        <title>Cloning and expression of the gene cluster encoding key proteins involved in acetyl-CoA synthesis in Clostridium thermoaceticum: CO dehydrogenase, the corrinoid/Fe-S protein, and methyltransferase.</title>
        <authorList>
            <person name="Roberts D.L."/>
            <person name="James-Hagstrom J.E."/>
            <person name="Garvin D.K."/>
            <person name="Gorst C.M."/>
            <person name="Runquist J.A."/>
            <person name="Baur J.R."/>
            <person name="Haase F.C."/>
            <person name="Ragsdale S.W."/>
        </authorList>
    </citation>
    <scope>NUCLEOTIDE SEQUENCE [GENOMIC DNA] OF 1-8</scope>
    <scope>PROTEIN SEQUENCE OF 2-19</scope>
    <scope>FUNCTION</scope>
    <source>
        <strain>ATCC 35608 / DSM 521 / JCM 9319</strain>
    </source>
</reference>
<reference key="3">
    <citation type="journal article" date="1987" name="J. Biol. Chem.">
        <title>Moessbauer, EPR, and optical studies of the corrinoid/iron-sulfur protein involved in the synthesis of acetyl coenzyme A by Clostridium thermoaceticum.</title>
        <authorList>
            <person name="Ragsdale S.W."/>
            <person name="Lindahl P.A."/>
            <person name="Muenck E."/>
        </authorList>
    </citation>
    <scope>FUNCTION</scope>
    <scope>COFACTOR</scope>
    <scope>5-METHOXYBENZIMIDAZOLYLCOBAMIDE-BINDING</scope>
</reference>
<reference key="4">
    <citation type="journal article" date="2012" name="Nature">
        <title>Visualizing molecular juggling within a B12-dependent methyltransferase complex.</title>
        <authorList>
            <person name="Kung Y."/>
            <person name="Ando N."/>
            <person name="Doukov T.I."/>
            <person name="Blasiak L.C."/>
            <person name="Bender G."/>
            <person name="Seravalli J."/>
            <person name="Ragsdale S.W."/>
            <person name="Drennan C.L."/>
        </authorList>
    </citation>
    <scope>X-RAY CRYSTALLOGRAPHY (2.38 ANGSTROMS) IN COMPLEX WITH ACSC; ACSE; COBALAMIN AND IRON-SULFUR</scope>
    <scope>COFACTOR</scope>
    <scope>FUNCTION</scope>
    <scope>SUBUNIT</scope>
</reference>
<proteinExistence type="evidence at protein level"/>
<accession>Q07340</accession>